<dbReference type="EC" id="3.4.19.3" evidence="1"/>
<dbReference type="EMBL" id="CP001401">
    <property type="protein sequence ID" value="ACP54506.1"/>
    <property type="molecule type" value="Genomic_DNA"/>
</dbReference>
<dbReference type="RefSeq" id="WP_010923507.1">
    <property type="nucleotide sequence ID" value="NC_012632.1"/>
</dbReference>
<dbReference type="SMR" id="C3N2L8"/>
<dbReference type="MEROPS" id="C15.001"/>
<dbReference type="KEGG" id="sim:M1627_0511"/>
<dbReference type="HOGENOM" id="CLU_043960_4_3_2"/>
<dbReference type="Proteomes" id="UP000002307">
    <property type="component" value="Chromosome"/>
</dbReference>
<dbReference type="GO" id="GO:0005829">
    <property type="term" value="C:cytosol"/>
    <property type="evidence" value="ECO:0007669"/>
    <property type="project" value="InterPro"/>
</dbReference>
<dbReference type="GO" id="GO:0016920">
    <property type="term" value="F:pyroglutamyl-peptidase activity"/>
    <property type="evidence" value="ECO:0007669"/>
    <property type="project" value="UniProtKB-UniRule"/>
</dbReference>
<dbReference type="GO" id="GO:0006508">
    <property type="term" value="P:proteolysis"/>
    <property type="evidence" value="ECO:0007669"/>
    <property type="project" value="UniProtKB-KW"/>
</dbReference>
<dbReference type="CDD" id="cd00501">
    <property type="entry name" value="Peptidase_C15"/>
    <property type="match status" value="1"/>
</dbReference>
<dbReference type="FunFam" id="3.40.630.20:FF:000005">
    <property type="entry name" value="Pyrrolidone-carboxylate peptidase"/>
    <property type="match status" value="1"/>
</dbReference>
<dbReference type="Gene3D" id="3.40.630.20">
    <property type="entry name" value="Peptidase C15, pyroglutamyl peptidase I-like"/>
    <property type="match status" value="1"/>
</dbReference>
<dbReference type="HAMAP" id="MF_00417">
    <property type="entry name" value="Pyrrolid_peptidase"/>
    <property type="match status" value="1"/>
</dbReference>
<dbReference type="InterPro" id="IPR000816">
    <property type="entry name" value="Peptidase_C15"/>
</dbReference>
<dbReference type="InterPro" id="IPR016125">
    <property type="entry name" value="Peptidase_C15-like"/>
</dbReference>
<dbReference type="InterPro" id="IPR036440">
    <property type="entry name" value="Peptidase_C15-like_sf"/>
</dbReference>
<dbReference type="InterPro" id="IPR029762">
    <property type="entry name" value="PGP-I_bact-type"/>
</dbReference>
<dbReference type="InterPro" id="IPR033694">
    <property type="entry name" value="PGPEP1_Cys_AS"/>
</dbReference>
<dbReference type="InterPro" id="IPR033693">
    <property type="entry name" value="PGPEP1_Glu_AS"/>
</dbReference>
<dbReference type="NCBIfam" id="NF009672">
    <property type="entry name" value="PRK13193.1"/>
    <property type="match status" value="1"/>
</dbReference>
<dbReference type="PANTHER" id="PTHR23402">
    <property type="entry name" value="PROTEASE FAMILY C15 PYROGLUTAMYL-PEPTIDASE I-RELATED"/>
    <property type="match status" value="1"/>
</dbReference>
<dbReference type="PANTHER" id="PTHR23402:SF1">
    <property type="entry name" value="PYROGLUTAMYL-PEPTIDASE I"/>
    <property type="match status" value="1"/>
</dbReference>
<dbReference type="Pfam" id="PF01470">
    <property type="entry name" value="Peptidase_C15"/>
    <property type="match status" value="1"/>
</dbReference>
<dbReference type="PIRSF" id="PIRSF015592">
    <property type="entry name" value="Prld-crbxl_pptds"/>
    <property type="match status" value="1"/>
</dbReference>
<dbReference type="PRINTS" id="PR00706">
    <property type="entry name" value="PYROGLUPTASE"/>
</dbReference>
<dbReference type="SUPFAM" id="SSF53182">
    <property type="entry name" value="Pyrrolidone carboxyl peptidase (pyroglutamate aminopeptidase)"/>
    <property type="match status" value="1"/>
</dbReference>
<dbReference type="PROSITE" id="PS01334">
    <property type="entry name" value="PYRASE_CYS"/>
    <property type="match status" value="1"/>
</dbReference>
<dbReference type="PROSITE" id="PS01333">
    <property type="entry name" value="PYRASE_GLU"/>
    <property type="match status" value="1"/>
</dbReference>
<protein>
    <recommendedName>
        <fullName evidence="1">Pyrrolidone-carboxylate peptidase</fullName>
        <ecNumber evidence="1">3.4.19.3</ecNumber>
    </recommendedName>
    <alternativeName>
        <fullName evidence="1">5-oxoprolyl-peptidase</fullName>
    </alternativeName>
    <alternativeName>
        <fullName evidence="1">Pyroglutamyl-peptidase I</fullName>
        <shortName evidence="1">PGP-I</shortName>
        <shortName evidence="1">Pyrase</shortName>
    </alternativeName>
</protein>
<proteinExistence type="inferred from homology"/>
<keyword id="KW-0963">Cytoplasm</keyword>
<keyword id="KW-0378">Hydrolase</keyword>
<keyword id="KW-0645">Protease</keyword>
<keyword id="KW-0788">Thiol protease</keyword>
<accession>C3N2L8</accession>
<comment type="function">
    <text evidence="1">Removes 5-oxoproline from various penultimate amino acid residues except L-proline.</text>
</comment>
<comment type="catalytic activity">
    <reaction evidence="1">
        <text>Release of an N-terminal pyroglutamyl group from a polypeptide, the second amino acid generally not being Pro.</text>
        <dbReference type="EC" id="3.4.19.3"/>
    </reaction>
</comment>
<comment type="subunit">
    <text evidence="1">Homotetramer.</text>
</comment>
<comment type="subcellular location">
    <subcellularLocation>
        <location evidence="1">Cytoplasm</location>
    </subcellularLocation>
</comment>
<comment type="similarity">
    <text evidence="1">Belongs to the peptidase C15 family.</text>
</comment>
<reference key="1">
    <citation type="journal article" date="2009" name="Proc. Natl. Acad. Sci. U.S.A.">
        <title>Biogeography of the Sulfolobus islandicus pan-genome.</title>
        <authorList>
            <person name="Reno M.L."/>
            <person name="Held N.L."/>
            <person name="Fields C.J."/>
            <person name="Burke P.V."/>
            <person name="Whitaker R.J."/>
        </authorList>
    </citation>
    <scope>NUCLEOTIDE SEQUENCE [LARGE SCALE GENOMIC DNA]</scope>
    <source>
        <strain>M.16.27</strain>
    </source>
</reference>
<feature type="chain" id="PRO_1000206024" description="Pyrrolidone-carboxylate peptidase">
    <location>
        <begin position="1"/>
        <end position="209"/>
    </location>
</feature>
<feature type="active site" evidence="1">
    <location>
        <position position="79"/>
    </location>
</feature>
<feature type="active site" evidence="1">
    <location>
        <position position="142"/>
    </location>
</feature>
<feature type="active site" evidence="1">
    <location>
        <position position="164"/>
    </location>
</feature>
<name>PCP_SACI3</name>
<organism>
    <name type="scientific">Saccharolobus islandicus (strain M.16.27)</name>
    <name type="common">Sulfolobus islandicus</name>
    <dbReference type="NCBI Taxonomy" id="427318"/>
    <lineage>
        <taxon>Archaea</taxon>
        <taxon>Thermoproteota</taxon>
        <taxon>Thermoprotei</taxon>
        <taxon>Sulfolobales</taxon>
        <taxon>Sulfolobaceae</taxon>
        <taxon>Saccharolobus</taxon>
    </lineage>
</organism>
<gene>
    <name evidence="1" type="primary">pcp</name>
    <name type="ordered locus">M1627_0511</name>
</gene>
<evidence type="ECO:0000255" key="1">
    <source>
        <dbReference type="HAMAP-Rule" id="MF_00417"/>
    </source>
</evidence>
<sequence length="209" mass="23404">MTVLLFGFEPFLEYKENPSQLIVEALNGSTILKEEVKGVILPVEYEKIEDLIVTKIREMKPILTLGIGVAPGRAKITPEKIAINYKYSREGDNAGKKYKGEKIDPLGQDGIFTNIPVEDLVDLLNENGIPAELSLSAGSYLCNNAMYIIIREARKYNSLGGFIHVPLHESYAARIQRPIPSMSLDTMIRGIRLSMEFILTNKKENLTFS</sequence>